<evidence type="ECO:0000255" key="1">
    <source>
        <dbReference type="HAMAP-Rule" id="MF_00214"/>
    </source>
</evidence>
<organism>
    <name type="scientific">Streptococcus pneumoniae (strain ATCC 700669 / Spain 23F-1)</name>
    <dbReference type="NCBI Taxonomy" id="561276"/>
    <lineage>
        <taxon>Bacteria</taxon>
        <taxon>Bacillati</taxon>
        <taxon>Bacillota</taxon>
        <taxon>Bacilli</taxon>
        <taxon>Lactobacillales</taxon>
        <taxon>Streptococcaceae</taxon>
        <taxon>Streptococcus</taxon>
    </lineage>
</organism>
<keyword id="KW-0028">Amino-acid biosynthesis</keyword>
<keyword id="KW-0057">Aromatic amino acid biosynthesis</keyword>
<keyword id="KW-0456">Lyase</keyword>
<keyword id="KW-0704">Schiff base</keyword>
<sequence>MKLIVSVMPRSLEEAQALSATRYLDADIIEWRADYLPKEAILQVAPAIFEKFAGRELVFTLRTRSEGGEIDLSPEEYIHLIKEVAQFYQPDYIDFEYYSYKDVFEEMLDFPNLVLSYHNFQETPENMMEILSELTILNPKLVKVAVMAHTEQDVLDLMNYTRGFKTLNPEQEYVTISMGKVGKVSRITADVTGSSWSFASLDEVSAPGQISLASMKKIREILDEA</sequence>
<reference key="1">
    <citation type="journal article" date="2009" name="J. Bacteriol.">
        <title>Role of conjugative elements in the evolution of the multidrug-resistant pandemic clone Streptococcus pneumoniae Spain23F ST81.</title>
        <authorList>
            <person name="Croucher N.J."/>
            <person name="Walker D."/>
            <person name="Romero P."/>
            <person name="Lennard N."/>
            <person name="Paterson G.K."/>
            <person name="Bason N.C."/>
            <person name="Mitchell A.M."/>
            <person name="Quail M.A."/>
            <person name="Andrew P.W."/>
            <person name="Parkhill J."/>
            <person name="Bentley S.D."/>
            <person name="Mitchell T.J."/>
        </authorList>
    </citation>
    <scope>NUCLEOTIDE SEQUENCE [LARGE SCALE GENOMIC DNA]</scope>
    <source>
        <strain>ATCC 700669 / Spain 23F-1</strain>
    </source>
</reference>
<name>AROD_STRPJ</name>
<feature type="chain" id="PRO_1000124788" description="3-dehydroquinate dehydratase">
    <location>
        <begin position="1"/>
        <end position="225"/>
    </location>
</feature>
<feature type="active site" description="Proton donor/acceptor" evidence="1">
    <location>
        <position position="118"/>
    </location>
</feature>
<feature type="active site" description="Schiff-base intermediate with substrate" evidence="1">
    <location>
        <position position="143"/>
    </location>
</feature>
<feature type="binding site" evidence="1">
    <location>
        <position position="6"/>
    </location>
    <ligand>
        <name>3-dehydroquinate</name>
        <dbReference type="ChEBI" id="CHEBI:32364"/>
    </ligand>
</feature>
<feature type="binding site" evidence="1">
    <location>
        <begin position="30"/>
        <end position="32"/>
    </location>
    <ligand>
        <name>3-dehydroquinate</name>
        <dbReference type="ChEBI" id="CHEBI:32364"/>
    </ligand>
</feature>
<feature type="binding site" evidence="1">
    <location>
        <position position="62"/>
    </location>
    <ligand>
        <name>3-dehydroquinate</name>
        <dbReference type="ChEBI" id="CHEBI:32364"/>
    </ligand>
</feature>
<feature type="binding site" evidence="1">
    <location>
        <position position="186"/>
    </location>
    <ligand>
        <name>3-dehydroquinate</name>
        <dbReference type="ChEBI" id="CHEBI:32364"/>
    </ligand>
</feature>
<feature type="binding site" evidence="1">
    <location>
        <position position="205"/>
    </location>
    <ligand>
        <name>3-dehydroquinate</name>
        <dbReference type="ChEBI" id="CHEBI:32364"/>
    </ligand>
</feature>
<feature type="binding site" evidence="1">
    <location>
        <position position="209"/>
    </location>
    <ligand>
        <name>3-dehydroquinate</name>
        <dbReference type="ChEBI" id="CHEBI:32364"/>
    </ligand>
</feature>
<proteinExistence type="inferred from homology"/>
<dbReference type="EC" id="4.2.1.10" evidence="1"/>
<dbReference type="EMBL" id="FM211187">
    <property type="protein sequence ID" value="CAR69143.1"/>
    <property type="molecule type" value="Genomic_DNA"/>
</dbReference>
<dbReference type="RefSeq" id="WP_000767775.1">
    <property type="nucleotide sequence ID" value="NC_011900.1"/>
</dbReference>
<dbReference type="SMR" id="B8ZKM6"/>
<dbReference type="KEGG" id="sne:SPN23F13430"/>
<dbReference type="HOGENOM" id="CLU_064444_0_0_9"/>
<dbReference type="UniPathway" id="UPA00053">
    <property type="reaction ID" value="UER00086"/>
</dbReference>
<dbReference type="GO" id="GO:0003855">
    <property type="term" value="F:3-dehydroquinate dehydratase activity"/>
    <property type="evidence" value="ECO:0007669"/>
    <property type="project" value="UniProtKB-UniRule"/>
</dbReference>
<dbReference type="GO" id="GO:0046279">
    <property type="term" value="P:3,4-dihydroxybenzoate biosynthetic process"/>
    <property type="evidence" value="ECO:0007669"/>
    <property type="project" value="TreeGrafter"/>
</dbReference>
<dbReference type="GO" id="GO:0008652">
    <property type="term" value="P:amino acid biosynthetic process"/>
    <property type="evidence" value="ECO:0007669"/>
    <property type="project" value="UniProtKB-KW"/>
</dbReference>
<dbReference type="GO" id="GO:0009073">
    <property type="term" value="P:aromatic amino acid family biosynthetic process"/>
    <property type="evidence" value="ECO:0007669"/>
    <property type="project" value="UniProtKB-KW"/>
</dbReference>
<dbReference type="GO" id="GO:0009423">
    <property type="term" value="P:chorismate biosynthetic process"/>
    <property type="evidence" value="ECO:0007669"/>
    <property type="project" value="UniProtKB-UniRule"/>
</dbReference>
<dbReference type="CDD" id="cd00502">
    <property type="entry name" value="DHQase_I"/>
    <property type="match status" value="1"/>
</dbReference>
<dbReference type="FunFam" id="3.20.20.70:FF:000047">
    <property type="entry name" value="3-dehydroquinate dehydratase"/>
    <property type="match status" value="1"/>
</dbReference>
<dbReference type="Gene3D" id="3.20.20.70">
    <property type="entry name" value="Aldolase class I"/>
    <property type="match status" value="1"/>
</dbReference>
<dbReference type="HAMAP" id="MF_00214">
    <property type="entry name" value="AroD"/>
    <property type="match status" value="1"/>
</dbReference>
<dbReference type="InterPro" id="IPR013785">
    <property type="entry name" value="Aldolase_TIM"/>
</dbReference>
<dbReference type="InterPro" id="IPR001381">
    <property type="entry name" value="DHquinase_I"/>
</dbReference>
<dbReference type="InterPro" id="IPR050146">
    <property type="entry name" value="Type-I_3-dehydroquinase"/>
</dbReference>
<dbReference type="NCBIfam" id="TIGR01093">
    <property type="entry name" value="aroD"/>
    <property type="match status" value="1"/>
</dbReference>
<dbReference type="PANTHER" id="PTHR43699">
    <property type="entry name" value="3-DEHYDROQUINATE DEHYDRATASE"/>
    <property type="match status" value="1"/>
</dbReference>
<dbReference type="PANTHER" id="PTHR43699:SF1">
    <property type="entry name" value="3-DEHYDROQUINATE DEHYDRATASE"/>
    <property type="match status" value="1"/>
</dbReference>
<dbReference type="Pfam" id="PF01487">
    <property type="entry name" value="DHquinase_I"/>
    <property type="match status" value="1"/>
</dbReference>
<dbReference type="SUPFAM" id="SSF51569">
    <property type="entry name" value="Aldolase"/>
    <property type="match status" value="1"/>
</dbReference>
<accession>B8ZKM6</accession>
<comment type="function">
    <text evidence="1">Involved in the third step of the chorismate pathway, which leads to the biosynthesis of aromatic amino acids. Catalyzes the cis-dehydration of 3-dehydroquinate (DHQ) and introduces the first double bond of the aromatic ring to yield 3-dehydroshikimate.</text>
</comment>
<comment type="catalytic activity">
    <reaction evidence="1">
        <text>3-dehydroquinate = 3-dehydroshikimate + H2O</text>
        <dbReference type="Rhea" id="RHEA:21096"/>
        <dbReference type="ChEBI" id="CHEBI:15377"/>
        <dbReference type="ChEBI" id="CHEBI:16630"/>
        <dbReference type="ChEBI" id="CHEBI:32364"/>
        <dbReference type="EC" id="4.2.1.10"/>
    </reaction>
</comment>
<comment type="pathway">
    <text evidence="1">Metabolic intermediate biosynthesis; chorismate biosynthesis; chorismate from D-erythrose 4-phosphate and phosphoenolpyruvate: step 3/7.</text>
</comment>
<comment type="subunit">
    <text evidence="1">Homodimer.</text>
</comment>
<comment type="similarity">
    <text evidence="1">Belongs to the type-I 3-dehydroquinase family.</text>
</comment>
<protein>
    <recommendedName>
        <fullName evidence="1">3-dehydroquinate dehydratase</fullName>
        <shortName evidence="1">3-dehydroquinase</shortName>
        <ecNumber evidence="1">4.2.1.10</ecNumber>
    </recommendedName>
    <alternativeName>
        <fullName evidence="1">Type I DHQase</fullName>
    </alternativeName>
    <alternativeName>
        <fullName evidence="1">Type I dehydroquinase</fullName>
        <shortName evidence="1">DHQ1</shortName>
    </alternativeName>
</protein>
<gene>
    <name evidence="1" type="primary">aroD</name>
    <name type="ordered locus">SPN23F13430</name>
</gene>